<reference key="1">
    <citation type="journal article" date="2007" name="PLoS Genet.">
        <title>Patterns and implications of gene gain and loss in the evolution of Prochlorococcus.</title>
        <authorList>
            <person name="Kettler G.C."/>
            <person name="Martiny A.C."/>
            <person name="Huang K."/>
            <person name="Zucker J."/>
            <person name="Coleman M.L."/>
            <person name="Rodrigue S."/>
            <person name="Chen F."/>
            <person name="Lapidus A."/>
            <person name="Ferriera S."/>
            <person name="Johnson J."/>
            <person name="Steglich C."/>
            <person name="Church G.M."/>
            <person name="Richardson P."/>
            <person name="Chisholm S.W."/>
        </authorList>
    </citation>
    <scope>NUCLEOTIDE SEQUENCE [LARGE SCALE GENOMIC DNA]</scope>
    <source>
        <strain>MIT 9303</strain>
    </source>
</reference>
<organism>
    <name type="scientific">Prochlorococcus marinus (strain MIT 9303)</name>
    <dbReference type="NCBI Taxonomy" id="59922"/>
    <lineage>
        <taxon>Bacteria</taxon>
        <taxon>Bacillati</taxon>
        <taxon>Cyanobacteriota</taxon>
        <taxon>Cyanophyceae</taxon>
        <taxon>Synechococcales</taxon>
        <taxon>Prochlorococcaceae</taxon>
        <taxon>Prochlorococcus</taxon>
    </lineage>
</organism>
<sequence>MLSLAHALESQLRAAIDRAFPEAAASARESGTGLDPQLAPASKPEFGDFQANAALPLAKPLKQPPRQIAAAIVDQLMVDTAFNAICLTPDIAGPGFINLTVRPECLAAEVQARLADARLGVPLVEGDNDGQQPTPVVVDFSSPNIAKEMHVGHLRSTIIGDSLARVLEFRGHPVLRLNHVGDWGTQFGMLITHLKQVAPEALETADAVDLGDLVVFYRQAKQRFDDDEAFQTTSREEVVKLQGGDPLSLKAWSLLCDQSRREFQKIYDRLDVRLNERGESFYNAYLESVVEDLNVSGLLVSDDGAQCVFLEGVTGKDGKPLPVIVQKSDGGFNYATTDLAAMRYRFAAPPQGDGARRVIYVTDAGQANHFAGVFQVAQRAGWIPDAGRLQHVPFGLVQGEDGKKLKTRAGDTVRLRELLDEAVERAESDLRRRLQEEGRDEDESFIEQVATTVGLAAVKYADLSQNRITNYQFSFDRMLALQGNTAPYLLYAVVRIAGIARKGGDLDVTTAELQFSETQEWALVRELLKFDAVIAEVEEELLPNRLCTYLFELSQVFNRFYDQVPVLKAEQPSRSCRLALCRLTADTLKLGLSLLGIPTLERM</sequence>
<keyword id="KW-0030">Aminoacyl-tRNA synthetase</keyword>
<keyword id="KW-0067">ATP-binding</keyword>
<keyword id="KW-0963">Cytoplasm</keyword>
<keyword id="KW-0436">Ligase</keyword>
<keyword id="KW-0547">Nucleotide-binding</keyword>
<keyword id="KW-0648">Protein biosynthesis</keyword>
<proteinExistence type="inferred from homology"/>
<name>SYR_PROM3</name>
<feature type="chain" id="PRO_1000018088" description="Arginine--tRNA ligase">
    <location>
        <begin position="1"/>
        <end position="603"/>
    </location>
</feature>
<feature type="short sequence motif" description="'HIGH' region">
    <location>
        <begin position="143"/>
        <end position="153"/>
    </location>
</feature>
<evidence type="ECO:0000255" key="1">
    <source>
        <dbReference type="HAMAP-Rule" id="MF_00123"/>
    </source>
</evidence>
<protein>
    <recommendedName>
        <fullName evidence="1">Arginine--tRNA ligase</fullName>
        <ecNumber evidence="1">6.1.1.19</ecNumber>
    </recommendedName>
    <alternativeName>
        <fullName evidence="1">Arginyl-tRNA synthetase</fullName>
        <shortName evidence="1">ArgRS</shortName>
    </alternativeName>
</protein>
<accession>A2CDB7</accession>
<comment type="catalytic activity">
    <reaction evidence="1">
        <text>tRNA(Arg) + L-arginine + ATP = L-arginyl-tRNA(Arg) + AMP + diphosphate</text>
        <dbReference type="Rhea" id="RHEA:20301"/>
        <dbReference type="Rhea" id="RHEA-COMP:9658"/>
        <dbReference type="Rhea" id="RHEA-COMP:9673"/>
        <dbReference type="ChEBI" id="CHEBI:30616"/>
        <dbReference type="ChEBI" id="CHEBI:32682"/>
        <dbReference type="ChEBI" id="CHEBI:33019"/>
        <dbReference type="ChEBI" id="CHEBI:78442"/>
        <dbReference type="ChEBI" id="CHEBI:78513"/>
        <dbReference type="ChEBI" id="CHEBI:456215"/>
        <dbReference type="EC" id="6.1.1.19"/>
    </reaction>
</comment>
<comment type="subunit">
    <text evidence="1">Monomer.</text>
</comment>
<comment type="subcellular location">
    <subcellularLocation>
        <location evidence="1">Cytoplasm</location>
    </subcellularLocation>
</comment>
<comment type="similarity">
    <text evidence="1">Belongs to the class-I aminoacyl-tRNA synthetase family.</text>
</comment>
<gene>
    <name evidence="1" type="primary">argS</name>
    <name type="ordered locus">P9303_27471</name>
</gene>
<dbReference type="EC" id="6.1.1.19" evidence="1"/>
<dbReference type="EMBL" id="CP000554">
    <property type="protein sequence ID" value="ABM79477.1"/>
    <property type="molecule type" value="Genomic_DNA"/>
</dbReference>
<dbReference type="RefSeq" id="WP_011827320.1">
    <property type="nucleotide sequence ID" value="NC_008820.1"/>
</dbReference>
<dbReference type="SMR" id="A2CDB7"/>
<dbReference type="STRING" id="59922.P9303_27471"/>
<dbReference type="KEGG" id="pmf:P9303_27471"/>
<dbReference type="HOGENOM" id="CLU_006406_5_1_3"/>
<dbReference type="BioCyc" id="PMAR59922:G1G80-2409-MONOMER"/>
<dbReference type="Proteomes" id="UP000002274">
    <property type="component" value="Chromosome"/>
</dbReference>
<dbReference type="GO" id="GO:0005737">
    <property type="term" value="C:cytoplasm"/>
    <property type="evidence" value="ECO:0007669"/>
    <property type="project" value="UniProtKB-SubCell"/>
</dbReference>
<dbReference type="GO" id="GO:0004814">
    <property type="term" value="F:arginine-tRNA ligase activity"/>
    <property type="evidence" value="ECO:0007669"/>
    <property type="project" value="UniProtKB-UniRule"/>
</dbReference>
<dbReference type="GO" id="GO:0005524">
    <property type="term" value="F:ATP binding"/>
    <property type="evidence" value="ECO:0007669"/>
    <property type="project" value="UniProtKB-UniRule"/>
</dbReference>
<dbReference type="GO" id="GO:0006420">
    <property type="term" value="P:arginyl-tRNA aminoacylation"/>
    <property type="evidence" value="ECO:0007669"/>
    <property type="project" value="UniProtKB-UniRule"/>
</dbReference>
<dbReference type="CDD" id="cd07956">
    <property type="entry name" value="Anticodon_Ia_Arg"/>
    <property type="match status" value="1"/>
</dbReference>
<dbReference type="CDD" id="cd00671">
    <property type="entry name" value="ArgRS_core"/>
    <property type="match status" value="1"/>
</dbReference>
<dbReference type="FunFam" id="3.40.50.620:FF:000030">
    <property type="entry name" value="Arginine--tRNA ligase"/>
    <property type="match status" value="1"/>
</dbReference>
<dbReference type="FunFam" id="1.10.730.10:FF:000006">
    <property type="entry name" value="Arginyl-tRNA synthetase 2, mitochondrial"/>
    <property type="match status" value="1"/>
</dbReference>
<dbReference type="Gene3D" id="3.30.1360.70">
    <property type="entry name" value="Arginyl tRNA synthetase N-terminal domain"/>
    <property type="match status" value="1"/>
</dbReference>
<dbReference type="Gene3D" id="3.40.50.620">
    <property type="entry name" value="HUPs"/>
    <property type="match status" value="1"/>
</dbReference>
<dbReference type="Gene3D" id="1.10.730.10">
    <property type="entry name" value="Isoleucyl-tRNA Synthetase, Domain 1"/>
    <property type="match status" value="1"/>
</dbReference>
<dbReference type="HAMAP" id="MF_00123">
    <property type="entry name" value="Arg_tRNA_synth"/>
    <property type="match status" value="1"/>
</dbReference>
<dbReference type="InterPro" id="IPR001412">
    <property type="entry name" value="aa-tRNA-synth_I_CS"/>
</dbReference>
<dbReference type="InterPro" id="IPR001278">
    <property type="entry name" value="Arg-tRNA-ligase"/>
</dbReference>
<dbReference type="InterPro" id="IPR005148">
    <property type="entry name" value="Arg-tRNA-synth_N"/>
</dbReference>
<dbReference type="InterPro" id="IPR036695">
    <property type="entry name" value="Arg-tRNA-synth_N_sf"/>
</dbReference>
<dbReference type="InterPro" id="IPR035684">
    <property type="entry name" value="ArgRS_core"/>
</dbReference>
<dbReference type="InterPro" id="IPR008909">
    <property type="entry name" value="DALR_anticod-bd"/>
</dbReference>
<dbReference type="InterPro" id="IPR014729">
    <property type="entry name" value="Rossmann-like_a/b/a_fold"/>
</dbReference>
<dbReference type="InterPro" id="IPR009080">
    <property type="entry name" value="tRNAsynth_Ia_anticodon-bd"/>
</dbReference>
<dbReference type="NCBIfam" id="TIGR00456">
    <property type="entry name" value="argS"/>
    <property type="match status" value="1"/>
</dbReference>
<dbReference type="PANTHER" id="PTHR11956:SF5">
    <property type="entry name" value="ARGININE--TRNA LIGASE, CYTOPLASMIC"/>
    <property type="match status" value="1"/>
</dbReference>
<dbReference type="PANTHER" id="PTHR11956">
    <property type="entry name" value="ARGINYL-TRNA SYNTHETASE"/>
    <property type="match status" value="1"/>
</dbReference>
<dbReference type="Pfam" id="PF03485">
    <property type="entry name" value="Arg_tRNA_synt_N"/>
    <property type="match status" value="1"/>
</dbReference>
<dbReference type="Pfam" id="PF05746">
    <property type="entry name" value="DALR_1"/>
    <property type="match status" value="1"/>
</dbReference>
<dbReference type="Pfam" id="PF00750">
    <property type="entry name" value="tRNA-synt_1d"/>
    <property type="match status" value="1"/>
</dbReference>
<dbReference type="PRINTS" id="PR01038">
    <property type="entry name" value="TRNASYNTHARG"/>
</dbReference>
<dbReference type="SMART" id="SM01016">
    <property type="entry name" value="Arg_tRNA_synt_N"/>
    <property type="match status" value="1"/>
</dbReference>
<dbReference type="SMART" id="SM00836">
    <property type="entry name" value="DALR_1"/>
    <property type="match status" value="1"/>
</dbReference>
<dbReference type="SUPFAM" id="SSF47323">
    <property type="entry name" value="Anticodon-binding domain of a subclass of class I aminoacyl-tRNA synthetases"/>
    <property type="match status" value="1"/>
</dbReference>
<dbReference type="SUPFAM" id="SSF55190">
    <property type="entry name" value="Arginyl-tRNA synthetase (ArgRS), N-terminal 'additional' domain"/>
    <property type="match status" value="1"/>
</dbReference>
<dbReference type="SUPFAM" id="SSF52374">
    <property type="entry name" value="Nucleotidylyl transferase"/>
    <property type="match status" value="1"/>
</dbReference>
<dbReference type="PROSITE" id="PS00178">
    <property type="entry name" value="AA_TRNA_LIGASE_I"/>
    <property type="match status" value="1"/>
</dbReference>